<reference key="1">
    <citation type="journal article" date="2007" name="PLoS ONE">
        <title>A glimpse of streptococcal toxic shock syndrome from comparative genomics of S. suis 2 Chinese isolates.</title>
        <authorList>
            <person name="Chen C."/>
            <person name="Tang J."/>
            <person name="Dong W."/>
            <person name="Wang C."/>
            <person name="Feng Y."/>
            <person name="Wang J."/>
            <person name="Zheng F."/>
            <person name="Pan X."/>
            <person name="Liu D."/>
            <person name="Li M."/>
            <person name="Song Y."/>
            <person name="Zhu X."/>
            <person name="Sun H."/>
            <person name="Feng T."/>
            <person name="Guo Z."/>
            <person name="Ju A."/>
            <person name="Ge J."/>
            <person name="Dong Y."/>
            <person name="Sun W."/>
            <person name="Jiang Y."/>
            <person name="Wang J."/>
            <person name="Yan J."/>
            <person name="Yang H."/>
            <person name="Wang X."/>
            <person name="Gao G.F."/>
            <person name="Yang R."/>
            <person name="Wang J."/>
            <person name="Yu J."/>
        </authorList>
    </citation>
    <scope>NUCLEOTIDE SEQUENCE [LARGE SCALE GENOMIC DNA]</scope>
    <source>
        <strain>05ZYH33</strain>
    </source>
</reference>
<sequence length="237" mass="27199">MKPEVFYKTLADQGIQLTDQQKHQFHRYFQLLVEWNEKINLTAITEESEVYLKHFYDSIAPLLQGHIQNEPLRLLDIGAGAGFPSLPMKIIFPQLDVTIIDSLNKRINFLHLLAEELELEGVHFYHGRAEDFAQDKNFRAQFDLVTARAVARMQILSELTIPYLKLHGKLIALKASSAEDELTQAKNALNLLFAKVIENHDYTLPNGDPRTLTIVEKKKETPNKFPRKAGMPNKRPL</sequence>
<name>RSMG_STRSY</name>
<proteinExistence type="inferred from homology"/>
<comment type="function">
    <text evidence="1">Specifically methylates the N7 position of a guanine in 16S rRNA.</text>
</comment>
<comment type="subcellular location">
    <subcellularLocation>
        <location evidence="1">Cytoplasm</location>
    </subcellularLocation>
</comment>
<comment type="similarity">
    <text evidence="1">Belongs to the methyltransferase superfamily. RNA methyltransferase RsmG family.</text>
</comment>
<gene>
    <name evidence="1" type="primary">rsmG</name>
    <name type="ordered locus">SSU05_0412</name>
</gene>
<organism>
    <name type="scientific">Streptococcus suis (strain 05ZYH33)</name>
    <dbReference type="NCBI Taxonomy" id="391295"/>
    <lineage>
        <taxon>Bacteria</taxon>
        <taxon>Bacillati</taxon>
        <taxon>Bacillota</taxon>
        <taxon>Bacilli</taxon>
        <taxon>Lactobacillales</taxon>
        <taxon>Streptococcaceae</taxon>
        <taxon>Streptococcus</taxon>
    </lineage>
</organism>
<feature type="chain" id="PRO_1000010228" description="Ribosomal RNA small subunit methyltransferase G">
    <location>
        <begin position="1"/>
        <end position="237"/>
    </location>
</feature>
<feature type="region of interest" description="Disordered" evidence="2">
    <location>
        <begin position="218"/>
        <end position="237"/>
    </location>
</feature>
<feature type="binding site" evidence="1">
    <location>
        <position position="78"/>
    </location>
    <ligand>
        <name>S-adenosyl-L-methionine</name>
        <dbReference type="ChEBI" id="CHEBI:59789"/>
    </ligand>
</feature>
<feature type="binding site" evidence="1">
    <location>
        <position position="83"/>
    </location>
    <ligand>
        <name>S-adenosyl-L-methionine</name>
        <dbReference type="ChEBI" id="CHEBI:59789"/>
    </ligand>
</feature>
<feature type="binding site" evidence="1">
    <location>
        <begin position="129"/>
        <end position="130"/>
    </location>
    <ligand>
        <name>S-adenosyl-L-methionine</name>
        <dbReference type="ChEBI" id="CHEBI:59789"/>
    </ligand>
</feature>
<feature type="binding site" evidence="1">
    <location>
        <position position="148"/>
    </location>
    <ligand>
        <name>S-adenosyl-L-methionine</name>
        <dbReference type="ChEBI" id="CHEBI:59789"/>
    </ligand>
</feature>
<keyword id="KW-0963">Cytoplasm</keyword>
<keyword id="KW-0489">Methyltransferase</keyword>
<keyword id="KW-0698">rRNA processing</keyword>
<keyword id="KW-0949">S-adenosyl-L-methionine</keyword>
<keyword id="KW-0808">Transferase</keyword>
<evidence type="ECO:0000255" key="1">
    <source>
        <dbReference type="HAMAP-Rule" id="MF_00074"/>
    </source>
</evidence>
<evidence type="ECO:0000256" key="2">
    <source>
        <dbReference type="SAM" id="MobiDB-lite"/>
    </source>
</evidence>
<dbReference type="EC" id="2.1.1.-" evidence="1"/>
<dbReference type="EMBL" id="CP000407">
    <property type="protein sequence ID" value="ABP89379.1"/>
    <property type="molecule type" value="Genomic_DNA"/>
</dbReference>
<dbReference type="SMR" id="A4VTE0"/>
<dbReference type="STRING" id="391295.SSU05_0412"/>
<dbReference type="KEGG" id="ssu:SSU05_0412"/>
<dbReference type="eggNOG" id="COG0357">
    <property type="taxonomic scope" value="Bacteria"/>
</dbReference>
<dbReference type="HOGENOM" id="CLU_065341_0_2_9"/>
<dbReference type="GO" id="GO:0005829">
    <property type="term" value="C:cytosol"/>
    <property type="evidence" value="ECO:0007669"/>
    <property type="project" value="TreeGrafter"/>
</dbReference>
<dbReference type="GO" id="GO:0070043">
    <property type="term" value="F:rRNA (guanine-N7-)-methyltransferase activity"/>
    <property type="evidence" value="ECO:0007669"/>
    <property type="project" value="UniProtKB-UniRule"/>
</dbReference>
<dbReference type="CDD" id="cd02440">
    <property type="entry name" value="AdoMet_MTases"/>
    <property type="match status" value="1"/>
</dbReference>
<dbReference type="FunFam" id="3.40.50.150:FF:000041">
    <property type="entry name" value="Ribosomal RNA small subunit methyltransferase G"/>
    <property type="match status" value="1"/>
</dbReference>
<dbReference type="Gene3D" id="3.40.50.150">
    <property type="entry name" value="Vaccinia Virus protein VP39"/>
    <property type="match status" value="1"/>
</dbReference>
<dbReference type="HAMAP" id="MF_00074">
    <property type="entry name" value="16SrRNA_methyltr_G"/>
    <property type="match status" value="1"/>
</dbReference>
<dbReference type="InterPro" id="IPR003682">
    <property type="entry name" value="rRNA_ssu_MeTfrase_G"/>
</dbReference>
<dbReference type="InterPro" id="IPR029063">
    <property type="entry name" value="SAM-dependent_MTases_sf"/>
</dbReference>
<dbReference type="NCBIfam" id="TIGR00138">
    <property type="entry name" value="rsmG_gidB"/>
    <property type="match status" value="1"/>
</dbReference>
<dbReference type="PANTHER" id="PTHR31760">
    <property type="entry name" value="S-ADENOSYL-L-METHIONINE-DEPENDENT METHYLTRANSFERASES SUPERFAMILY PROTEIN"/>
    <property type="match status" value="1"/>
</dbReference>
<dbReference type="PANTHER" id="PTHR31760:SF0">
    <property type="entry name" value="S-ADENOSYL-L-METHIONINE-DEPENDENT METHYLTRANSFERASES SUPERFAMILY PROTEIN"/>
    <property type="match status" value="1"/>
</dbReference>
<dbReference type="Pfam" id="PF02527">
    <property type="entry name" value="GidB"/>
    <property type="match status" value="1"/>
</dbReference>
<dbReference type="PIRSF" id="PIRSF003078">
    <property type="entry name" value="GidB"/>
    <property type="match status" value="1"/>
</dbReference>
<dbReference type="SUPFAM" id="SSF53335">
    <property type="entry name" value="S-adenosyl-L-methionine-dependent methyltransferases"/>
    <property type="match status" value="1"/>
</dbReference>
<protein>
    <recommendedName>
        <fullName evidence="1">Ribosomal RNA small subunit methyltransferase G</fullName>
        <ecNumber evidence="1">2.1.1.-</ecNumber>
    </recommendedName>
    <alternativeName>
        <fullName evidence="1">16S rRNA 7-methylguanosine methyltransferase</fullName>
        <shortName evidence="1">16S rRNA m7G methyltransferase</shortName>
    </alternativeName>
</protein>
<accession>A4VTE0</accession>